<evidence type="ECO:0000250" key="1"/>
<evidence type="ECO:0000255" key="2">
    <source>
        <dbReference type="PROSITE-ProRule" id="PRU01182"/>
    </source>
</evidence>
<evidence type="ECO:0000269" key="3">
    <source>
    </source>
</evidence>
<evidence type="ECO:0000305" key="4"/>
<keyword id="KW-0963">Cytoplasm</keyword>
<keyword id="KW-0378">Hydrolase</keyword>
<keyword id="KW-0479">Metal-binding</keyword>
<keyword id="KW-0482">Metalloprotease</keyword>
<keyword id="KW-0539">Nucleus</keyword>
<keyword id="KW-0645">Protease</keyword>
<keyword id="KW-1185">Reference proteome</keyword>
<keyword id="KW-0736">Signalosome</keyword>
<keyword id="KW-0862">Zinc</keyword>
<name>CSN5_NEUCR</name>
<feature type="chain" id="PRO_0000194855" description="COP9 signalosome complex subunit 5">
    <location>
        <begin position="1"/>
        <end position="336"/>
    </location>
</feature>
<feature type="domain" description="MPN" evidence="2">
    <location>
        <begin position="44"/>
        <end position="181"/>
    </location>
</feature>
<feature type="short sequence motif" description="JAMM motif" evidence="2">
    <location>
        <begin position="127"/>
        <end position="140"/>
    </location>
</feature>
<feature type="binding site" evidence="2">
    <location>
        <position position="127"/>
    </location>
    <ligand>
        <name>Zn(2+)</name>
        <dbReference type="ChEBI" id="CHEBI:29105"/>
        <note>catalytic</note>
    </ligand>
</feature>
<feature type="binding site" evidence="2">
    <location>
        <position position="129"/>
    </location>
    <ligand>
        <name>Zn(2+)</name>
        <dbReference type="ChEBI" id="CHEBI:29105"/>
        <note>catalytic</note>
    </ligand>
</feature>
<feature type="binding site" evidence="2">
    <location>
        <position position="140"/>
    </location>
    <ligand>
        <name>Zn(2+)</name>
        <dbReference type="ChEBI" id="CHEBI:29105"/>
        <note>catalytic</note>
    </ligand>
</feature>
<accession>Q7RXX8</accession>
<protein>
    <recommendedName>
        <fullName>COP9 signalosome complex subunit 5</fullName>
        <ecNumber>3.4.-.-</ecNumber>
    </recommendedName>
</protein>
<organism>
    <name type="scientific">Neurospora crassa (strain ATCC 24698 / 74-OR23-1A / CBS 708.71 / DSM 1257 / FGSC 987)</name>
    <dbReference type="NCBI Taxonomy" id="367110"/>
    <lineage>
        <taxon>Eukaryota</taxon>
        <taxon>Fungi</taxon>
        <taxon>Dikarya</taxon>
        <taxon>Ascomycota</taxon>
        <taxon>Pezizomycotina</taxon>
        <taxon>Sordariomycetes</taxon>
        <taxon>Sordariomycetidae</taxon>
        <taxon>Sordariales</taxon>
        <taxon>Sordariaceae</taxon>
        <taxon>Neurospora</taxon>
    </lineage>
</organism>
<gene>
    <name type="primary">csn-5</name>
    <name type="synonym">rri1</name>
    <name type="ORF">NCU00467</name>
</gene>
<proteinExistence type="evidence at protein level"/>
<reference key="1">
    <citation type="journal article" date="2005" name="Genes Dev.">
        <title>The COP9 signalosome regulates the Neurospora circadian clock by controlling the stability of the SCFFWD-1 complex.</title>
        <authorList>
            <person name="He Q."/>
            <person name="Cheng P."/>
            <person name="He Q."/>
            <person name="Liu Y."/>
        </authorList>
    </citation>
    <scope>NUCLEOTIDE SEQUENCE [MRNA]</scope>
    <scope>IDENTIFICATION BY MASS SPECTROMETRY</scope>
    <scope>IDENTIFICATION IN THE COP9 SIGNALOSOME COMPLEX</scope>
    <scope>FUNCTION OF THE CSN COMPLEX</scope>
</reference>
<reference key="2">
    <citation type="journal article" date="2003" name="Nature">
        <title>The genome sequence of the filamentous fungus Neurospora crassa.</title>
        <authorList>
            <person name="Galagan J.E."/>
            <person name="Calvo S.E."/>
            <person name="Borkovich K.A."/>
            <person name="Selker E.U."/>
            <person name="Read N.D."/>
            <person name="Jaffe D.B."/>
            <person name="FitzHugh W."/>
            <person name="Ma L.-J."/>
            <person name="Smirnov S."/>
            <person name="Purcell S."/>
            <person name="Rehman B."/>
            <person name="Elkins T."/>
            <person name="Engels R."/>
            <person name="Wang S."/>
            <person name="Nielsen C.B."/>
            <person name="Butler J."/>
            <person name="Endrizzi M."/>
            <person name="Qui D."/>
            <person name="Ianakiev P."/>
            <person name="Bell-Pedersen D."/>
            <person name="Nelson M.A."/>
            <person name="Werner-Washburne M."/>
            <person name="Selitrennikoff C.P."/>
            <person name="Kinsey J.A."/>
            <person name="Braun E.L."/>
            <person name="Zelter A."/>
            <person name="Schulte U."/>
            <person name="Kothe G.O."/>
            <person name="Jedd G."/>
            <person name="Mewes H.-W."/>
            <person name="Staben C."/>
            <person name="Marcotte E."/>
            <person name="Greenberg D."/>
            <person name="Roy A."/>
            <person name="Foley K."/>
            <person name="Naylor J."/>
            <person name="Stange-Thomann N."/>
            <person name="Barrett R."/>
            <person name="Gnerre S."/>
            <person name="Kamal M."/>
            <person name="Kamvysselis M."/>
            <person name="Mauceli E.W."/>
            <person name="Bielke C."/>
            <person name="Rudd S."/>
            <person name="Frishman D."/>
            <person name="Krystofova S."/>
            <person name="Rasmussen C."/>
            <person name="Metzenberg R.L."/>
            <person name="Perkins D.D."/>
            <person name="Kroken S."/>
            <person name="Cogoni C."/>
            <person name="Macino G."/>
            <person name="Catcheside D.E.A."/>
            <person name="Li W."/>
            <person name="Pratt R.J."/>
            <person name="Osmani S.A."/>
            <person name="DeSouza C.P.C."/>
            <person name="Glass N.L."/>
            <person name="Orbach M.J."/>
            <person name="Berglund J.A."/>
            <person name="Voelker R."/>
            <person name="Yarden O."/>
            <person name="Plamann M."/>
            <person name="Seiler S."/>
            <person name="Dunlap J.C."/>
            <person name="Radford A."/>
            <person name="Aramayo R."/>
            <person name="Natvig D.O."/>
            <person name="Alex L.A."/>
            <person name="Mannhaupt G."/>
            <person name="Ebbole D.J."/>
            <person name="Freitag M."/>
            <person name="Paulsen I."/>
            <person name="Sachs M.S."/>
            <person name="Lander E.S."/>
            <person name="Nusbaum C."/>
            <person name="Birren B.W."/>
        </authorList>
    </citation>
    <scope>NUCLEOTIDE SEQUENCE [LARGE SCALE GENOMIC DNA]</scope>
    <source>
        <strain>ATCC 24698 / 74-OR23-1A / CBS 708.71 / DSM 1257 / FGSC 987</strain>
    </source>
</reference>
<sequence length="336" mass="37462">MELPPNPGLVDVQRDALYAYDSEAHKAVVNSRPWTNDHKYFKTVRISSVAMIKMVMHARSGGNLEVMGMMQGYIEGSTMVITDAYRLPVEGTETRVNAQDEANEYMVEYLRLCREENRLENVIGWYHSHPGYGCWLSGIDVGTQSLQQQFNEPFVAVVIDPDRTVSQNKVEIGAFRTIPEGIKPFAATNTTTGDGQSVPLNKVEDFGAHSHRYYALDVEHFKSTLDSKLLETLWNKYWVQTLAQNPLLTNRDYTSSQMVDLGSRISKASKSLEMLSTTGQRGPKSDAVDQNIEKLLSEVKQIAAKERSGLMAAEVKGKVFGCGCRGQAEGVQPEKS</sequence>
<comment type="function">
    <text evidence="1 3">Catalytic component of the COP9 signalosome (CSN) complex that acts as an regulator of the ubiquitin (Ubl) conjugation pathway by mediating the deneddylation of the cullin subunit of SCF-type E3 ubiquitin-protein ligase complexes (By similarity). The CSN complex is involved in the regulation of the circadian clock through its control of the stability of the SCF(FWD-1) complex.</text>
</comment>
<comment type="subunit">
    <text evidence="1">Component of the COP9 signalosome (CSN) complex.</text>
</comment>
<comment type="subcellular location">
    <subcellularLocation>
        <location evidence="1">Cytoplasm</location>
    </subcellularLocation>
    <subcellularLocation>
        <location evidence="1">Nucleus</location>
    </subcellularLocation>
</comment>
<comment type="domain">
    <text evidence="1">The JAMM motif is essential for the protease activity of the CSN complex resulting in deneddylation of cullins. It constitutes the catalytic center of the complex (By similarity).</text>
</comment>
<comment type="similarity">
    <text evidence="4">Belongs to the peptidase M67A family. CSN5 subfamily.</text>
</comment>
<dbReference type="EC" id="3.4.-.-"/>
<dbReference type="EMBL" id="DQ242513">
    <property type="protein sequence ID" value="ABB36583.1"/>
    <property type="molecule type" value="mRNA"/>
</dbReference>
<dbReference type="EMBL" id="CM002238">
    <property type="protein sequence ID" value="EAA27550.1"/>
    <property type="molecule type" value="Genomic_DNA"/>
</dbReference>
<dbReference type="RefSeq" id="XP_956786.1">
    <property type="nucleotide sequence ID" value="XM_951693.2"/>
</dbReference>
<dbReference type="SMR" id="Q7RXX8"/>
<dbReference type="STRING" id="367110.Q7RXX8"/>
<dbReference type="MEROPS" id="M67.A13"/>
<dbReference type="PaxDb" id="5141-EFNCRP00000000154"/>
<dbReference type="EnsemblFungi" id="EAA27550">
    <property type="protein sequence ID" value="EAA27550"/>
    <property type="gene ID" value="NCU00467"/>
</dbReference>
<dbReference type="GeneID" id="3872933"/>
<dbReference type="KEGG" id="ncr:NCU00467"/>
<dbReference type="VEuPathDB" id="FungiDB:NCU00467"/>
<dbReference type="HOGENOM" id="CLU_053034_0_2_1"/>
<dbReference type="InParanoid" id="Q7RXX8"/>
<dbReference type="OrthoDB" id="605656at2759"/>
<dbReference type="Proteomes" id="UP000001805">
    <property type="component" value="Chromosome 3, Linkage Group III"/>
</dbReference>
<dbReference type="GO" id="GO:0008180">
    <property type="term" value="C:COP9 signalosome"/>
    <property type="evidence" value="ECO:0000318"/>
    <property type="project" value="GO_Central"/>
</dbReference>
<dbReference type="GO" id="GO:0005737">
    <property type="term" value="C:cytoplasm"/>
    <property type="evidence" value="ECO:0000318"/>
    <property type="project" value="GO_Central"/>
</dbReference>
<dbReference type="GO" id="GO:0019784">
    <property type="term" value="F:deNEDDylase activity"/>
    <property type="evidence" value="ECO:0000318"/>
    <property type="project" value="GO_Central"/>
</dbReference>
<dbReference type="GO" id="GO:0046872">
    <property type="term" value="F:metal ion binding"/>
    <property type="evidence" value="ECO:0007669"/>
    <property type="project" value="UniProtKB-KW"/>
</dbReference>
<dbReference type="GO" id="GO:0008237">
    <property type="term" value="F:metallopeptidase activity"/>
    <property type="evidence" value="ECO:0000318"/>
    <property type="project" value="GO_Central"/>
</dbReference>
<dbReference type="GO" id="GO:0000338">
    <property type="term" value="P:protein deneddylation"/>
    <property type="evidence" value="ECO:0007669"/>
    <property type="project" value="EnsemblFungi"/>
</dbReference>
<dbReference type="GO" id="GO:0006508">
    <property type="term" value="P:proteolysis"/>
    <property type="evidence" value="ECO:0007669"/>
    <property type="project" value="UniProtKB-KW"/>
</dbReference>
<dbReference type="GO" id="GO:0051726">
    <property type="term" value="P:regulation of cell cycle"/>
    <property type="evidence" value="ECO:0000318"/>
    <property type="project" value="GO_Central"/>
</dbReference>
<dbReference type="CDD" id="cd08069">
    <property type="entry name" value="MPN_RPN11_CSN5"/>
    <property type="match status" value="1"/>
</dbReference>
<dbReference type="FunFam" id="3.40.140.10:FF:000095">
    <property type="entry name" value="COP9 signalosome complex subunit 5"/>
    <property type="match status" value="1"/>
</dbReference>
<dbReference type="Gene3D" id="3.40.140.10">
    <property type="entry name" value="Cytidine Deaminase, domain 2"/>
    <property type="match status" value="1"/>
</dbReference>
<dbReference type="InterPro" id="IPR040961">
    <property type="entry name" value="CSN5_C"/>
</dbReference>
<dbReference type="InterPro" id="IPR000555">
    <property type="entry name" value="JAMM/MPN+_dom"/>
</dbReference>
<dbReference type="InterPro" id="IPR050242">
    <property type="entry name" value="JAMM_MPN+_peptidase_M67A"/>
</dbReference>
<dbReference type="InterPro" id="IPR037518">
    <property type="entry name" value="MPN"/>
</dbReference>
<dbReference type="PANTHER" id="PTHR10410">
    <property type="entry name" value="EUKARYOTIC TRANSLATION INITIATION FACTOR 3 -RELATED"/>
    <property type="match status" value="1"/>
</dbReference>
<dbReference type="Pfam" id="PF18323">
    <property type="entry name" value="CSN5_C"/>
    <property type="match status" value="1"/>
</dbReference>
<dbReference type="Pfam" id="PF01398">
    <property type="entry name" value="JAB"/>
    <property type="match status" value="1"/>
</dbReference>
<dbReference type="SMART" id="SM00232">
    <property type="entry name" value="JAB_MPN"/>
    <property type="match status" value="1"/>
</dbReference>
<dbReference type="SUPFAM" id="SSF102712">
    <property type="entry name" value="JAB1/MPN domain"/>
    <property type="match status" value="1"/>
</dbReference>
<dbReference type="PROSITE" id="PS50249">
    <property type="entry name" value="MPN"/>
    <property type="match status" value="1"/>
</dbReference>